<organism>
    <name type="scientific">Buchnera aphidicola subsp. Acyrthosiphon pisum (strain APS)</name>
    <name type="common">Acyrthosiphon pisum symbiotic bacterium</name>
    <dbReference type="NCBI Taxonomy" id="107806"/>
    <lineage>
        <taxon>Bacteria</taxon>
        <taxon>Pseudomonadati</taxon>
        <taxon>Pseudomonadota</taxon>
        <taxon>Gammaproteobacteria</taxon>
        <taxon>Enterobacterales</taxon>
        <taxon>Erwiniaceae</taxon>
        <taxon>Buchnera</taxon>
    </lineage>
</organism>
<comment type="function">
    <text evidence="1">Catalyzes the 2'-O-methylation of the ribose of cytidine 1402 (C1402) in 16S rRNA.</text>
</comment>
<comment type="catalytic activity">
    <reaction evidence="1">
        <text>cytidine(1402) in 16S rRNA + S-adenosyl-L-methionine = 2'-O-methylcytidine(1402) in 16S rRNA + S-adenosyl-L-homocysteine + H(+)</text>
        <dbReference type="Rhea" id="RHEA:42924"/>
        <dbReference type="Rhea" id="RHEA-COMP:10285"/>
        <dbReference type="Rhea" id="RHEA-COMP:10286"/>
        <dbReference type="ChEBI" id="CHEBI:15378"/>
        <dbReference type="ChEBI" id="CHEBI:57856"/>
        <dbReference type="ChEBI" id="CHEBI:59789"/>
        <dbReference type="ChEBI" id="CHEBI:74495"/>
        <dbReference type="ChEBI" id="CHEBI:82748"/>
        <dbReference type="EC" id="2.1.1.198"/>
    </reaction>
</comment>
<comment type="subcellular location">
    <subcellularLocation>
        <location evidence="1">Cytoplasm</location>
    </subcellularLocation>
</comment>
<comment type="similarity">
    <text evidence="1">Belongs to the methyltransferase superfamily. RsmI family.</text>
</comment>
<dbReference type="EC" id="2.1.1.198" evidence="1"/>
<dbReference type="EMBL" id="BA000003">
    <property type="protein sequence ID" value="BAB12810.1"/>
    <property type="molecule type" value="Genomic_DNA"/>
</dbReference>
<dbReference type="RefSeq" id="NP_239924.1">
    <property type="nucleotide sequence ID" value="NC_002528.1"/>
</dbReference>
<dbReference type="RefSeq" id="WP_009874044.1">
    <property type="nucleotide sequence ID" value="NZ_AP036055.1"/>
</dbReference>
<dbReference type="SMR" id="P57192"/>
<dbReference type="EnsemblBacteria" id="BAB12810">
    <property type="protein sequence ID" value="BAB12810"/>
    <property type="gene ID" value="BAB12810"/>
</dbReference>
<dbReference type="KEGG" id="buc:BU091"/>
<dbReference type="PATRIC" id="fig|107806.10.peg.98"/>
<dbReference type="eggNOG" id="COG0313">
    <property type="taxonomic scope" value="Bacteria"/>
</dbReference>
<dbReference type="HOGENOM" id="CLU_044779_1_0_6"/>
<dbReference type="Proteomes" id="UP000001806">
    <property type="component" value="Chromosome"/>
</dbReference>
<dbReference type="GO" id="GO:0005737">
    <property type="term" value="C:cytoplasm"/>
    <property type="evidence" value="ECO:0007669"/>
    <property type="project" value="UniProtKB-SubCell"/>
</dbReference>
<dbReference type="GO" id="GO:0070677">
    <property type="term" value="F:rRNA (cytosine-2'-O-)-methyltransferase activity"/>
    <property type="evidence" value="ECO:0007669"/>
    <property type="project" value="UniProtKB-UniRule"/>
</dbReference>
<dbReference type="CDD" id="cd11648">
    <property type="entry name" value="RsmI"/>
    <property type="match status" value="1"/>
</dbReference>
<dbReference type="FunFam" id="3.30.950.10:FF:000002">
    <property type="entry name" value="Ribosomal RNA small subunit methyltransferase I"/>
    <property type="match status" value="1"/>
</dbReference>
<dbReference type="Gene3D" id="3.40.1010.10">
    <property type="entry name" value="Cobalt-precorrin-4 Transmethylase, Domain 1"/>
    <property type="match status" value="1"/>
</dbReference>
<dbReference type="Gene3D" id="3.30.950.10">
    <property type="entry name" value="Methyltransferase, Cobalt-precorrin-4 Transmethylase, Domain 2"/>
    <property type="match status" value="1"/>
</dbReference>
<dbReference type="HAMAP" id="MF_01877">
    <property type="entry name" value="16SrRNA_methyltr_I"/>
    <property type="match status" value="1"/>
</dbReference>
<dbReference type="InterPro" id="IPR000878">
    <property type="entry name" value="4pyrrol_Mease"/>
</dbReference>
<dbReference type="InterPro" id="IPR035996">
    <property type="entry name" value="4pyrrol_Methylase_sf"/>
</dbReference>
<dbReference type="InterPro" id="IPR014777">
    <property type="entry name" value="4pyrrole_Mease_sub1"/>
</dbReference>
<dbReference type="InterPro" id="IPR014776">
    <property type="entry name" value="4pyrrole_Mease_sub2"/>
</dbReference>
<dbReference type="InterPro" id="IPR008189">
    <property type="entry name" value="rRNA_ssu_MeTfrase_I"/>
</dbReference>
<dbReference type="InterPro" id="IPR018063">
    <property type="entry name" value="SAM_MeTrfase_RsmI_CS"/>
</dbReference>
<dbReference type="NCBIfam" id="TIGR00096">
    <property type="entry name" value="16S rRNA (cytidine(1402)-2'-O)-methyltransferase"/>
    <property type="match status" value="1"/>
</dbReference>
<dbReference type="PANTHER" id="PTHR46111">
    <property type="entry name" value="RIBOSOMAL RNA SMALL SUBUNIT METHYLTRANSFERASE I"/>
    <property type="match status" value="1"/>
</dbReference>
<dbReference type="PANTHER" id="PTHR46111:SF1">
    <property type="entry name" value="RIBOSOMAL RNA SMALL SUBUNIT METHYLTRANSFERASE I"/>
    <property type="match status" value="1"/>
</dbReference>
<dbReference type="Pfam" id="PF00590">
    <property type="entry name" value="TP_methylase"/>
    <property type="match status" value="1"/>
</dbReference>
<dbReference type="PIRSF" id="PIRSF005917">
    <property type="entry name" value="MTase_YraL"/>
    <property type="match status" value="1"/>
</dbReference>
<dbReference type="SUPFAM" id="SSF53790">
    <property type="entry name" value="Tetrapyrrole methylase"/>
    <property type="match status" value="1"/>
</dbReference>
<dbReference type="PROSITE" id="PS01296">
    <property type="entry name" value="RSMI"/>
    <property type="match status" value="1"/>
</dbReference>
<proteinExistence type="inferred from homology"/>
<sequence>MNEFYIGILYIVPTPIGNLSDITYRALEVLKDVDIIAAENIRHTNILLQHFNIKNNLILMNKDNEKKQSHNLIQELKKGKKIALVSNAGTPIINDPGCILIKQCHIFDIKVIPLPGACAAITALSASGIINNRFCYEGFLPSRKKSRCDLLHSLKEETRTIIFYESKHRILESIKDIIEQIDKNRHIVIAREMTKKWESIYGAKASLILEWLKENKYRYKGEMVIIIDGFKKLKNYTLSKKILDTFSILRKFFSLKTSVLITAQIHDINKNKLYQYVIKKEE</sequence>
<protein>
    <recommendedName>
        <fullName evidence="1">Ribosomal RNA small subunit methyltransferase I</fullName>
        <ecNumber evidence="1">2.1.1.198</ecNumber>
    </recommendedName>
    <alternativeName>
        <fullName evidence="1">16S rRNA 2'-O-ribose C1402 methyltransferase</fullName>
    </alternativeName>
    <alternativeName>
        <fullName evidence="1">rRNA (cytidine-2'-O-)-methyltransferase RsmI</fullName>
    </alternativeName>
</protein>
<reference key="1">
    <citation type="journal article" date="2000" name="Nature">
        <title>Genome sequence of the endocellular bacterial symbiont of aphids Buchnera sp. APS.</title>
        <authorList>
            <person name="Shigenobu S."/>
            <person name="Watanabe H."/>
            <person name="Hattori M."/>
            <person name="Sakaki Y."/>
            <person name="Ishikawa H."/>
        </authorList>
    </citation>
    <scope>NUCLEOTIDE SEQUENCE [LARGE SCALE GENOMIC DNA]</scope>
    <source>
        <strain>APS</strain>
    </source>
</reference>
<feature type="chain" id="PRO_0000211935" description="Ribosomal RNA small subunit methyltransferase I">
    <location>
        <begin position="1"/>
        <end position="282"/>
    </location>
</feature>
<accession>P57192</accession>
<evidence type="ECO:0000255" key="1">
    <source>
        <dbReference type="HAMAP-Rule" id="MF_01877"/>
    </source>
</evidence>
<keyword id="KW-0963">Cytoplasm</keyword>
<keyword id="KW-0489">Methyltransferase</keyword>
<keyword id="KW-1185">Reference proteome</keyword>
<keyword id="KW-0698">rRNA processing</keyword>
<keyword id="KW-0949">S-adenosyl-L-methionine</keyword>
<keyword id="KW-0808">Transferase</keyword>
<gene>
    <name evidence="1" type="primary">rsmI</name>
    <name type="ordered locus">BU091</name>
</gene>
<name>RSMI_BUCAI</name>